<organism>
    <name type="scientific">Drosophila melanogaster</name>
    <name type="common">Fruit fly</name>
    <dbReference type="NCBI Taxonomy" id="7227"/>
    <lineage>
        <taxon>Eukaryota</taxon>
        <taxon>Metazoa</taxon>
        <taxon>Ecdysozoa</taxon>
        <taxon>Arthropoda</taxon>
        <taxon>Hexapoda</taxon>
        <taxon>Insecta</taxon>
        <taxon>Pterygota</taxon>
        <taxon>Neoptera</taxon>
        <taxon>Endopterygota</taxon>
        <taxon>Diptera</taxon>
        <taxon>Brachycera</taxon>
        <taxon>Muscomorpha</taxon>
        <taxon>Ephydroidea</taxon>
        <taxon>Drosophilidae</taxon>
        <taxon>Drosophila</taxon>
        <taxon>Sophophora</taxon>
    </lineage>
</organism>
<accession>Q7JUY7</accession>
<sequence length="517" mass="56140">MPYQPANSGGTSGGSKAAAKMAQLKFWNKQNSSKQQQQDKDKDAADGGNNTSGGGTGSNSNGDAKSEAKNGKRNWLHTPEQLISGHAVYLVKFFGNLSVDQPKGIEVVKEAIRKLQFAQQMKKAETGTQEKFKKLEITISIKGVAIQEPRTHKILHQFPLYNISYCADEKGVKKFFSFIAKTVKTQDGSDPTSNGHANGNGDGSAKVEESHECFVFISNKLASDITLTIGQAFDLAYRKYMDSTEKTNLSKAQQQINHLQQTVNVYKERLREVSAKLPKAELDALLFNLGIKDILEAPTTEPQNGIEVASEALSNGKLDDDKLLIDTNSTTASTHSASPSSFLPIVPPRNNLSSQISIGGKSNSQKMDELLLNSDSDSDFDPRADETQEIGGTGRSAISNMFGFEPANSFGQHLFSNNNDHKLQNNNSSLLITSNNNSINSSGFSSELNITPPLLAPPPKIAAPRRLNSVTTGNGLNGNTDLFGSDPFELNNGPNIFKQNQLNLDDFSLESLDPLRK</sequence>
<evidence type="ECO:0000255" key="1">
    <source>
        <dbReference type="PROSITE-ProRule" id="PRU00148"/>
    </source>
</evidence>
<evidence type="ECO:0000256" key="2">
    <source>
        <dbReference type="SAM" id="MobiDB-lite"/>
    </source>
</evidence>
<evidence type="ECO:0000269" key="3">
    <source>
    </source>
</evidence>
<evidence type="ECO:0000269" key="4">
    <source>
    </source>
</evidence>
<evidence type="ECO:0000269" key="5">
    <source>
    </source>
</evidence>
<evidence type="ECO:0000269" key="6">
    <source>
    </source>
</evidence>
<evidence type="ECO:0000269" key="7">
    <source>
    </source>
</evidence>
<evidence type="ECO:0000269" key="8">
    <source>
    </source>
</evidence>
<evidence type="ECO:0000305" key="9"/>
<protein>
    <recommendedName>
        <fullName>PTB domain-containing adapter protein ced-6</fullName>
    </recommendedName>
    <alternativeName>
        <fullName>Cell death protein 6 homolog</fullName>
    </alternativeName>
</protein>
<keyword id="KW-0963">Cytoplasm</keyword>
<keyword id="KW-0217">Developmental protein</keyword>
<keyword id="KW-0581">Phagocytosis</keyword>
<keyword id="KW-0597">Phosphoprotein</keyword>
<keyword id="KW-1185">Reference proteome</keyword>
<proteinExistence type="evidence at protein level"/>
<feature type="chain" id="PRO_0000296684" description="PTB domain-containing adapter protein ced-6">
    <location>
        <begin position="1"/>
        <end position="517"/>
    </location>
</feature>
<feature type="domain" description="PID" evidence="1">
    <location>
        <begin position="83"/>
        <end position="265"/>
    </location>
</feature>
<feature type="region of interest" description="Disordered" evidence="2">
    <location>
        <begin position="1"/>
        <end position="70"/>
    </location>
</feature>
<feature type="region of interest" description="Disordered" evidence="2">
    <location>
        <begin position="185"/>
        <end position="205"/>
    </location>
</feature>
<feature type="region of interest" description="Disordered" evidence="2">
    <location>
        <begin position="374"/>
        <end position="393"/>
    </location>
</feature>
<feature type="compositionally biased region" description="Low complexity" evidence="2">
    <location>
        <begin position="1"/>
        <end position="19"/>
    </location>
</feature>
<feature type="compositionally biased region" description="Polar residues" evidence="2">
    <location>
        <begin position="185"/>
        <end position="197"/>
    </location>
</feature>
<feature type="modified residue" description="Phosphoserine" evidence="4 5">
    <location>
        <position position="338"/>
    </location>
</feature>
<feature type="modified residue" description="Phosphoserine" evidence="5">
    <location>
        <position position="374"/>
    </location>
</feature>
<feature type="modified residue" description="Phosphoserine" evidence="5">
    <location>
        <position position="376"/>
    </location>
</feature>
<feature type="modified residue" description="Phosphoserine" evidence="5">
    <location>
        <position position="378"/>
    </location>
</feature>
<feature type="modified residue" description="Phosphoserine" evidence="4">
    <location>
        <position position="469"/>
    </location>
</feature>
<feature type="modified residue" description="Phosphothreonine" evidence="4">
    <location>
        <position position="480"/>
    </location>
</feature>
<comment type="function">
    <text evidence="3 6 7 8">Plays a role in axon pruning in larval mushroom body neurons during metamorphosis (PubMed:16772168). Plays a role in the infiltration of glial cell processes into mushroom body lobes and the subsequent engulfment of degenerating axon branches (PubMed:16772168). Involved in Drpr-mediated phagocytosis of apoptotic cells (PubMed:19927123). Required for bacterial phagocytosis (PubMed:19890048). During neuromuscular junction development, required for the clearance of pruned ghost boutons and presynaptic debris and for normal synaptic growth (PubMed:19707574).</text>
</comment>
<comment type="subunit">
    <text evidence="3">May interact with Drpr.</text>
</comment>
<comment type="subcellular location">
    <subcellularLocation>
        <location>Cytoplasm</location>
    </subcellularLocation>
</comment>
<comment type="developmental stage">
    <text evidence="3">Detected in brain cells adjacent to the mushroom body. Expression is low in wandering larvae, elevated 6 hours after puparium formation and back to low levels 12 hours after puparium formation. Detected in infiltrating processes of a subset of glial cells adjacent to mushroom body dorsal lobes.</text>
</comment>
<comment type="disruption phenotype">
    <text evidence="6 7 8">Embryonic hemocytes display a reduced level of apoptotic cell phagocytosis (PubMed:19927123). Larval hemocytes display reduced bacterial phagocytosis (PubMed:19890048). RNAi-mediated knockdown in muscle leads to an increase in the number of ghost synaptic boutons but does not affect the deposition of presynaptic debris while RNAi-mediated knockdown in glia leads to a significant increase in presynaptic debris deposition but does not affect the number of ghost boutons (PubMed:19707574).</text>
</comment>
<comment type="similarity">
    <text evidence="9">Belongs to the ced-6 family.</text>
</comment>
<name>CED6_DROME</name>
<dbReference type="EMBL" id="AF204777">
    <property type="protein sequence ID" value="AAF22653.1"/>
    <property type="molecule type" value="mRNA"/>
</dbReference>
<dbReference type="EMBL" id="AE013599">
    <property type="protein sequence ID" value="AAG22292.1"/>
    <property type="molecule type" value="Genomic_DNA"/>
</dbReference>
<dbReference type="EMBL" id="AE013599">
    <property type="protein sequence ID" value="AAM71067.1"/>
    <property type="molecule type" value="Genomic_DNA"/>
</dbReference>
<dbReference type="EMBL" id="AY119596">
    <property type="protein sequence ID" value="AAM50250.1"/>
    <property type="molecule type" value="mRNA"/>
</dbReference>
<dbReference type="RefSeq" id="NP_610488.1">
    <property type="nucleotide sequence ID" value="NM_136644.3"/>
</dbReference>
<dbReference type="RefSeq" id="NP_724789.1">
    <property type="nucleotide sequence ID" value="NM_165675.3"/>
</dbReference>
<dbReference type="RefSeq" id="NP_724790.1">
    <property type="nucleotide sequence ID" value="NM_165676.2"/>
</dbReference>
<dbReference type="SMR" id="Q7JUY7"/>
<dbReference type="BioGRID" id="61802">
    <property type="interactions" value="4"/>
</dbReference>
<dbReference type="FunCoup" id="Q7JUY7">
    <property type="interactions" value="222"/>
</dbReference>
<dbReference type="IntAct" id="Q7JUY7">
    <property type="interactions" value="1"/>
</dbReference>
<dbReference type="STRING" id="7227.FBpp0297720"/>
<dbReference type="iPTMnet" id="Q7JUY7"/>
<dbReference type="PaxDb" id="7227-FBpp0297720"/>
<dbReference type="DNASU" id="35971"/>
<dbReference type="EnsemblMetazoa" id="FBtr0088548">
    <property type="protein sequence ID" value="FBpp0087631"/>
    <property type="gene ID" value="FBgn0029092"/>
</dbReference>
<dbReference type="EnsemblMetazoa" id="FBtr0088549">
    <property type="protein sequence ID" value="FBpp0087632"/>
    <property type="gene ID" value="FBgn0029092"/>
</dbReference>
<dbReference type="EnsemblMetazoa" id="FBtr0088550">
    <property type="protein sequence ID" value="FBpp0087633"/>
    <property type="gene ID" value="FBgn0029092"/>
</dbReference>
<dbReference type="GeneID" id="35971"/>
<dbReference type="KEGG" id="dme:Dmel_CG11804"/>
<dbReference type="UCSC" id="CG11804-RA">
    <property type="organism name" value="d. melanogaster"/>
</dbReference>
<dbReference type="AGR" id="FB:FBgn0029092"/>
<dbReference type="CTD" id="35971"/>
<dbReference type="FlyBase" id="FBgn0029092">
    <property type="gene designation" value="ced-6"/>
</dbReference>
<dbReference type="VEuPathDB" id="VectorBase:FBgn0029092"/>
<dbReference type="eggNOG" id="KOG3536">
    <property type="taxonomic scope" value="Eukaryota"/>
</dbReference>
<dbReference type="GeneTree" id="ENSGT00940000156186"/>
<dbReference type="InParanoid" id="Q7JUY7"/>
<dbReference type="OMA" id="PEETHEC"/>
<dbReference type="OrthoDB" id="10057585at2759"/>
<dbReference type="PhylomeDB" id="Q7JUY7"/>
<dbReference type="SignaLink" id="Q7JUY7"/>
<dbReference type="BioGRID-ORCS" id="35971">
    <property type="hits" value="0 hits in 1 CRISPR screen"/>
</dbReference>
<dbReference type="GenomeRNAi" id="35971"/>
<dbReference type="PRO" id="PR:Q7JUY7"/>
<dbReference type="Proteomes" id="UP000000803">
    <property type="component" value="Chromosome 2R"/>
</dbReference>
<dbReference type="Bgee" id="FBgn0029092">
    <property type="expression patterns" value="Expressed in hemocyte (sensu Nematoda and Protostomia) in arthropod fat body and 174 other cell types or tissues"/>
</dbReference>
<dbReference type="ExpressionAtlas" id="Q7JUY7">
    <property type="expression patterns" value="baseline and differential"/>
</dbReference>
<dbReference type="GO" id="GO:0005737">
    <property type="term" value="C:cytoplasm"/>
    <property type="evidence" value="ECO:0007669"/>
    <property type="project" value="UniProtKB-SubCell"/>
</dbReference>
<dbReference type="GO" id="GO:0043277">
    <property type="term" value="P:apoptotic cell clearance"/>
    <property type="evidence" value="ECO:0000315"/>
    <property type="project" value="FlyBase"/>
</dbReference>
<dbReference type="GO" id="GO:0016319">
    <property type="term" value="P:mushroom body development"/>
    <property type="evidence" value="ECO:0000315"/>
    <property type="project" value="UniProtKB"/>
</dbReference>
<dbReference type="GO" id="GO:0016322">
    <property type="term" value="P:neuron remodeling"/>
    <property type="evidence" value="ECO:0000315"/>
    <property type="project" value="FlyBase"/>
</dbReference>
<dbReference type="CDD" id="cd01273">
    <property type="entry name" value="PTB_CED-6"/>
    <property type="match status" value="1"/>
</dbReference>
<dbReference type="FunFam" id="2.30.29.30:FF:000118">
    <property type="entry name" value="GULP PTB domain containing engulfment adaptor 1"/>
    <property type="match status" value="1"/>
</dbReference>
<dbReference type="Gene3D" id="2.30.29.30">
    <property type="entry name" value="Pleckstrin-homology domain (PH domain)/Phosphotyrosine-binding domain (PTB)"/>
    <property type="match status" value="1"/>
</dbReference>
<dbReference type="InterPro" id="IPR051133">
    <property type="entry name" value="Adapter_Engulfment-Domain"/>
</dbReference>
<dbReference type="InterPro" id="IPR011993">
    <property type="entry name" value="PH-like_dom_sf"/>
</dbReference>
<dbReference type="InterPro" id="IPR006020">
    <property type="entry name" value="PTB/PI_dom"/>
</dbReference>
<dbReference type="PANTHER" id="PTHR11232:SF77">
    <property type="entry name" value="GULP PTB DOMAIN CONTAINING ENGULFMENT ADAPTOR 1"/>
    <property type="match status" value="1"/>
</dbReference>
<dbReference type="PANTHER" id="PTHR11232">
    <property type="entry name" value="PHOSPHOTYROSINE INTERACTION DOMAIN-CONTAINING FAMILY MEMBER"/>
    <property type="match status" value="1"/>
</dbReference>
<dbReference type="Pfam" id="PF00640">
    <property type="entry name" value="PID"/>
    <property type="match status" value="1"/>
</dbReference>
<dbReference type="SMART" id="SM00462">
    <property type="entry name" value="PTB"/>
    <property type="match status" value="1"/>
</dbReference>
<dbReference type="SUPFAM" id="SSF50729">
    <property type="entry name" value="PH domain-like"/>
    <property type="match status" value="1"/>
</dbReference>
<dbReference type="PROSITE" id="PS01179">
    <property type="entry name" value="PID"/>
    <property type="match status" value="1"/>
</dbReference>
<reference key="1">
    <citation type="journal article" date="1999" name="Curr. Biol.">
        <title>The human homologue of Caenorhabditis elegans CED-6 specifically promotes phagocytosis of apoptotic cells.</title>
        <authorList>
            <person name="Smits E."/>
            <person name="Van Criekinge W."/>
            <person name="Plaetinck G."/>
            <person name="Bogaert T."/>
        </authorList>
    </citation>
    <scope>NUCLEOTIDE SEQUENCE [MRNA]</scope>
</reference>
<reference key="2">
    <citation type="journal article" date="2000" name="Science">
        <title>The genome sequence of Drosophila melanogaster.</title>
        <authorList>
            <person name="Adams M.D."/>
            <person name="Celniker S.E."/>
            <person name="Holt R.A."/>
            <person name="Evans C.A."/>
            <person name="Gocayne J.D."/>
            <person name="Amanatides P.G."/>
            <person name="Scherer S.E."/>
            <person name="Li P.W."/>
            <person name="Hoskins R.A."/>
            <person name="Galle R.F."/>
            <person name="George R.A."/>
            <person name="Lewis S.E."/>
            <person name="Richards S."/>
            <person name="Ashburner M."/>
            <person name="Henderson S.N."/>
            <person name="Sutton G.G."/>
            <person name="Wortman J.R."/>
            <person name="Yandell M.D."/>
            <person name="Zhang Q."/>
            <person name="Chen L.X."/>
            <person name="Brandon R.C."/>
            <person name="Rogers Y.-H.C."/>
            <person name="Blazej R.G."/>
            <person name="Champe M."/>
            <person name="Pfeiffer B.D."/>
            <person name="Wan K.H."/>
            <person name="Doyle C."/>
            <person name="Baxter E.G."/>
            <person name="Helt G."/>
            <person name="Nelson C.R."/>
            <person name="Miklos G.L.G."/>
            <person name="Abril J.F."/>
            <person name="Agbayani A."/>
            <person name="An H.-J."/>
            <person name="Andrews-Pfannkoch C."/>
            <person name="Baldwin D."/>
            <person name="Ballew R.M."/>
            <person name="Basu A."/>
            <person name="Baxendale J."/>
            <person name="Bayraktaroglu L."/>
            <person name="Beasley E.M."/>
            <person name="Beeson K.Y."/>
            <person name="Benos P.V."/>
            <person name="Berman B.P."/>
            <person name="Bhandari D."/>
            <person name="Bolshakov S."/>
            <person name="Borkova D."/>
            <person name="Botchan M.R."/>
            <person name="Bouck J."/>
            <person name="Brokstein P."/>
            <person name="Brottier P."/>
            <person name="Burtis K.C."/>
            <person name="Busam D.A."/>
            <person name="Butler H."/>
            <person name="Cadieu E."/>
            <person name="Center A."/>
            <person name="Chandra I."/>
            <person name="Cherry J.M."/>
            <person name="Cawley S."/>
            <person name="Dahlke C."/>
            <person name="Davenport L.B."/>
            <person name="Davies P."/>
            <person name="de Pablos B."/>
            <person name="Delcher A."/>
            <person name="Deng Z."/>
            <person name="Mays A.D."/>
            <person name="Dew I."/>
            <person name="Dietz S.M."/>
            <person name="Dodson K."/>
            <person name="Doup L.E."/>
            <person name="Downes M."/>
            <person name="Dugan-Rocha S."/>
            <person name="Dunkov B.C."/>
            <person name="Dunn P."/>
            <person name="Durbin K.J."/>
            <person name="Evangelista C.C."/>
            <person name="Ferraz C."/>
            <person name="Ferriera S."/>
            <person name="Fleischmann W."/>
            <person name="Fosler C."/>
            <person name="Gabrielian A.E."/>
            <person name="Garg N.S."/>
            <person name="Gelbart W.M."/>
            <person name="Glasser K."/>
            <person name="Glodek A."/>
            <person name="Gong F."/>
            <person name="Gorrell J.H."/>
            <person name="Gu Z."/>
            <person name="Guan P."/>
            <person name="Harris M."/>
            <person name="Harris N.L."/>
            <person name="Harvey D.A."/>
            <person name="Heiman T.J."/>
            <person name="Hernandez J.R."/>
            <person name="Houck J."/>
            <person name="Hostin D."/>
            <person name="Houston K.A."/>
            <person name="Howland T.J."/>
            <person name="Wei M.-H."/>
            <person name="Ibegwam C."/>
            <person name="Jalali M."/>
            <person name="Kalush F."/>
            <person name="Karpen G.H."/>
            <person name="Ke Z."/>
            <person name="Kennison J.A."/>
            <person name="Ketchum K.A."/>
            <person name="Kimmel B.E."/>
            <person name="Kodira C.D."/>
            <person name="Kraft C.L."/>
            <person name="Kravitz S."/>
            <person name="Kulp D."/>
            <person name="Lai Z."/>
            <person name="Lasko P."/>
            <person name="Lei Y."/>
            <person name="Levitsky A.A."/>
            <person name="Li J.H."/>
            <person name="Li Z."/>
            <person name="Liang Y."/>
            <person name="Lin X."/>
            <person name="Liu X."/>
            <person name="Mattei B."/>
            <person name="McIntosh T.C."/>
            <person name="McLeod M.P."/>
            <person name="McPherson D."/>
            <person name="Merkulov G."/>
            <person name="Milshina N.V."/>
            <person name="Mobarry C."/>
            <person name="Morris J."/>
            <person name="Moshrefi A."/>
            <person name="Mount S.M."/>
            <person name="Moy M."/>
            <person name="Murphy B."/>
            <person name="Murphy L."/>
            <person name="Muzny D.M."/>
            <person name="Nelson D.L."/>
            <person name="Nelson D.R."/>
            <person name="Nelson K.A."/>
            <person name="Nixon K."/>
            <person name="Nusskern D.R."/>
            <person name="Pacleb J.M."/>
            <person name="Palazzolo M."/>
            <person name="Pittman G.S."/>
            <person name="Pan S."/>
            <person name="Pollard J."/>
            <person name="Puri V."/>
            <person name="Reese M.G."/>
            <person name="Reinert K."/>
            <person name="Remington K."/>
            <person name="Saunders R.D.C."/>
            <person name="Scheeler F."/>
            <person name="Shen H."/>
            <person name="Shue B.C."/>
            <person name="Siden-Kiamos I."/>
            <person name="Simpson M."/>
            <person name="Skupski M.P."/>
            <person name="Smith T.J."/>
            <person name="Spier E."/>
            <person name="Spradling A.C."/>
            <person name="Stapleton M."/>
            <person name="Strong R."/>
            <person name="Sun E."/>
            <person name="Svirskas R."/>
            <person name="Tector C."/>
            <person name="Turner R."/>
            <person name="Venter E."/>
            <person name="Wang A.H."/>
            <person name="Wang X."/>
            <person name="Wang Z.-Y."/>
            <person name="Wassarman D.A."/>
            <person name="Weinstock G.M."/>
            <person name="Weissenbach J."/>
            <person name="Williams S.M."/>
            <person name="Woodage T."/>
            <person name="Worley K.C."/>
            <person name="Wu D."/>
            <person name="Yang S."/>
            <person name="Yao Q.A."/>
            <person name="Ye J."/>
            <person name="Yeh R.-F."/>
            <person name="Zaveri J.S."/>
            <person name="Zhan M."/>
            <person name="Zhang G."/>
            <person name="Zhao Q."/>
            <person name="Zheng L."/>
            <person name="Zheng X.H."/>
            <person name="Zhong F.N."/>
            <person name="Zhong W."/>
            <person name="Zhou X."/>
            <person name="Zhu S.C."/>
            <person name="Zhu X."/>
            <person name="Smith H.O."/>
            <person name="Gibbs R.A."/>
            <person name="Myers E.W."/>
            <person name="Rubin G.M."/>
            <person name="Venter J.C."/>
        </authorList>
    </citation>
    <scope>NUCLEOTIDE SEQUENCE [LARGE SCALE GENOMIC DNA]</scope>
    <source>
        <strain>Berkeley</strain>
    </source>
</reference>
<reference key="3">
    <citation type="journal article" date="2002" name="Genome Biol.">
        <title>Annotation of the Drosophila melanogaster euchromatic genome: a systematic review.</title>
        <authorList>
            <person name="Misra S."/>
            <person name="Crosby M.A."/>
            <person name="Mungall C.J."/>
            <person name="Matthews B.B."/>
            <person name="Campbell K.S."/>
            <person name="Hradecky P."/>
            <person name="Huang Y."/>
            <person name="Kaminker J.S."/>
            <person name="Millburn G.H."/>
            <person name="Prochnik S.E."/>
            <person name="Smith C.D."/>
            <person name="Tupy J.L."/>
            <person name="Whitfield E.J."/>
            <person name="Bayraktaroglu L."/>
            <person name="Berman B.P."/>
            <person name="Bettencourt B.R."/>
            <person name="Celniker S.E."/>
            <person name="de Grey A.D.N.J."/>
            <person name="Drysdale R.A."/>
            <person name="Harris N.L."/>
            <person name="Richter J."/>
            <person name="Russo S."/>
            <person name="Schroeder A.J."/>
            <person name="Shu S.Q."/>
            <person name="Stapleton M."/>
            <person name="Yamada C."/>
            <person name="Ashburner M."/>
            <person name="Gelbart W.M."/>
            <person name="Rubin G.M."/>
            <person name="Lewis S.E."/>
        </authorList>
    </citation>
    <scope>GENOME REANNOTATION</scope>
    <source>
        <strain>Berkeley</strain>
    </source>
</reference>
<reference key="4">
    <citation type="journal article" date="2002" name="Genome Biol.">
        <title>A Drosophila full-length cDNA resource.</title>
        <authorList>
            <person name="Stapleton M."/>
            <person name="Carlson J.W."/>
            <person name="Brokstein P."/>
            <person name="Yu C."/>
            <person name="Champe M."/>
            <person name="George R.A."/>
            <person name="Guarin H."/>
            <person name="Kronmiller B."/>
            <person name="Pacleb J.M."/>
            <person name="Park S."/>
            <person name="Wan K.H."/>
            <person name="Rubin G.M."/>
            <person name="Celniker S.E."/>
        </authorList>
    </citation>
    <scope>NUCLEOTIDE SEQUENCE [LARGE SCALE MRNA]</scope>
    <source>
        <strain>Berkeley</strain>
        <tissue>Embryo</tissue>
    </source>
</reference>
<reference key="5">
    <citation type="journal article" date="2006" name="Neuron">
        <title>Essential role of the apoptotic cell engulfment genes draper and ced-6 in programmed axon pruning during Drosophila metamorphosis.</title>
        <authorList>
            <person name="Awasaki T."/>
            <person name="Tatsumi R."/>
            <person name="Takahashi K."/>
            <person name="Arai K."/>
            <person name="Nakanishi Y."/>
            <person name="Ueda R."/>
            <person name="Ito K."/>
        </authorList>
    </citation>
    <scope>FUNCTION</scope>
    <scope>INTERACTION WITH DRPR</scope>
    <scope>DEVELOPMENTAL STAGE</scope>
</reference>
<reference key="6">
    <citation type="journal article" date="2007" name="Mol. Biosyst.">
        <title>An integrated chemical, mass spectrometric and computational strategy for (quantitative) phosphoproteomics: application to Drosophila melanogaster Kc167 cells.</title>
        <authorList>
            <person name="Bodenmiller B."/>
            <person name="Mueller L.N."/>
            <person name="Pedrioli P.G.A."/>
            <person name="Pflieger D."/>
            <person name="Juenger M.A."/>
            <person name="Eng J.K."/>
            <person name="Aebersold R."/>
            <person name="Tao W.A."/>
        </authorList>
    </citation>
    <scope>PHOSPHORYLATION [LARGE SCALE ANALYSIS] AT SER-338; SER-469 AND THR-480</scope>
    <scope>IDENTIFICATION BY MASS SPECTROMETRY</scope>
</reference>
<reference key="7">
    <citation type="journal article" date="2008" name="J. Proteome Res.">
        <title>Phosphoproteome analysis of Drosophila melanogaster embryos.</title>
        <authorList>
            <person name="Zhai B."/>
            <person name="Villen J."/>
            <person name="Beausoleil S.A."/>
            <person name="Mintseris J."/>
            <person name="Gygi S.P."/>
        </authorList>
    </citation>
    <scope>PHOSPHORYLATION [LARGE SCALE ANALYSIS] AT SER-338; SER-374; SER-376 AND SER-378</scope>
    <scope>IDENTIFICATION BY MASS SPECTROMETRY</scope>
    <source>
        <tissue>Embryo</tissue>
    </source>
</reference>
<reference key="8">
    <citation type="journal article" date="2009" name="EMBO J.">
        <title>Pretaporter, a Drosophila protein serving as a ligand for Draper in the phagocytosis of apoptotic cells.</title>
        <authorList>
            <person name="Kuraishi T."/>
            <person name="Nakagawa Y."/>
            <person name="Nagaosa K."/>
            <person name="Hashimoto Y."/>
            <person name="Ishimoto T."/>
            <person name="Moki T."/>
            <person name="Fujita Y."/>
            <person name="Nakayama H."/>
            <person name="Dohmae N."/>
            <person name="Shiratsuchi A."/>
            <person name="Yamamoto N."/>
            <person name="Ueda K."/>
            <person name="Yamaguchi M."/>
            <person name="Awasaki T."/>
            <person name="Nakanishi Y."/>
        </authorList>
    </citation>
    <scope>FUNCTION</scope>
    <scope>DISRUPTION PHENOTYPE</scope>
</reference>
<reference key="9">
    <citation type="journal article" date="2009" name="J. Immunol.">
        <title>Identification of lipoteichoic acid as a ligand for draper in the phagocytosis of Staphylococcus aureus by Drosophila hemocytes.</title>
        <authorList>
            <person name="Hashimoto Y."/>
            <person name="Tabuchi Y."/>
            <person name="Sakurai K."/>
            <person name="Kutsuna M."/>
            <person name="Kurokawa K."/>
            <person name="Awasaki T."/>
            <person name="Sekimizu K."/>
            <person name="Nakanishi Y."/>
            <person name="Shiratsuchi A."/>
        </authorList>
    </citation>
    <scope>FUNCTION</scope>
    <scope>DISRUPTION PHENOTYPE</scope>
</reference>
<reference key="10">
    <citation type="journal article" date="2009" name="PLoS Biol.">
        <title>Glia and muscle sculpt neuromuscular arbors by engulfing destabilized synaptic boutons and shed presynaptic debris.</title>
        <authorList>
            <person name="Fuentes-Medel Y."/>
            <person name="Logan M.A."/>
            <person name="Ashley J."/>
            <person name="Ataman B."/>
            <person name="Budnik V."/>
            <person name="Freeman M.R."/>
        </authorList>
    </citation>
    <scope>FUNCTION</scope>
    <scope>DISRUPTION PHENOTYPE</scope>
</reference>
<gene>
    <name type="primary">ced-6</name>
    <name type="ORF">CG11804</name>
</gene>